<name>FTSH_CUPMC</name>
<dbReference type="EC" id="3.4.24.-" evidence="1"/>
<dbReference type="EMBL" id="CP000352">
    <property type="protein sequence ID" value="ABF09067.1"/>
    <property type="molecule type" value="Genomic_DNA"/>
</dbReference>
<dbReference type="SMR" id="Q1LLA9"/>
<dbReference type="STRING" id="266264.Rmet_2188"/>
<dbReference type="KEGG" id="rme:Rmet_2188"/>
<dbReference type="eggNOG" id="COG0465">
    <property type="taxonomic scope" value="Bacteria"/>
</dbReference>
<dbReference type="HOGENOM" id="CLU_000688_16_2_4"/>
<dbReference type="Proteomes" id="UP000002429">
    <property type="component" value="Chromosome"/>
</dbReference>
<dbReference type="GO" id="GO:0005886">
    <property type="term" value="C:plasma membrane"/>
    <property type="evidence" value="ECO:0007669"/>
    <property type="project" value="UniProtKB-SubCell"/>
</dbReference>
<dbReference type="GO" id="GO:0005524">
    <property type="term" value="F:ATP binding"/>
    <property type="evidence" value="ECO:0007669"/>
    <property type="project" value="UniProtKB-UniRule"/>
</dbReference>
<dbReference type="GO" id="GO:0016887">
    <property type="term" value="F:ATP hydrolysis activity"/>
    <property type="evidence" value="ECO:0007669"/>
    <property type="project" value="UniProtKB-UniRule"/>
</dbReference>
<dbReference type="GO" id="GO:0004176">
    <property type="term" value="F:ATP-dependent peptidase activity"/>
    <property type="evidence" value="ECO:0007669"/>
    <property type="project" value="InterPro"/>
</dbReference>
<dbReference type="GO" id="GO:0004222">
    <property type="term" value="F:metalloendopeptidase activity"/>
    <property type="evidence" value="ECO:0007669"/>
    <property type="project" value="InterPro"/>
</dbReference>
<dbReference type="GO" id="GO:0008270">
    <property type="term" value="F:zinc ion binding"/>
    <property type="evidence" value="ECO:0007669"/>
    <property type="project" value="UniProtKB-UniRule"/>
</dbReference>
<dbReference type="GO" id="GO:0030163">
    <property type="term" value="P:protein catabolic process"/>
    <property type="evidence" value="ECO:0007669"/>
    <property type="project" value="UniProtKB-UniRule"/>
</dbReference>
<dbReference type="GO" id="GO:0006508">
    <property type="term" value="P:proteolysis"/>
    <property type="evidence" value="ECO:0007669"/>
    <property type="project" value="UniProtKB-KW"/>
</dbReference>
<dbReference type="CDD" id="cd19501">
    <property type="entry name" value="RecA-like_FtsH"/>
    <property type="match status" value="1"/>
</dbReference>
<dbReference type="FunFam" id="1.10.8.60:FF:000001">
    <property type="entry name" value="ATP-dependent zinc metalloprotease FtsH"/>
    <property type="match status" value="1"/>
</dbReference>
<dbReference type="FunFam" id="1.20.58.760:FF:000001">
    <property type="entry name" value="ATP-dependent zinc metalloprotease FtsH"/>
    <property type="match status" value="1"/>
</dbReference>
<dbReference type="FunFam" id="3.40.50.300:FF:000001">
    <property type="entry name" value="ATP-dependent zinc metalloprotease FtsH"/>
    <property type="match status" value="1"/>
</dbReference>
<dbReference type="Gene3D" id="1.10.8.60">
    <property type="match status" value="1"/>
</dbReference>
<dbReference type="Gene3D" id="3.30.720.210">
    <property type="match status" value="1"/>
</dbReference>
<dbReference type="Gene3D" id="3.40.50.300">
    <property type="entry name" value="P-loop containing nucleotide triphosphate hydrolases"/>
    <property type="match status" value="1"/>
</dbReference>
<dbReference type="Gene3D" id="1.20.58.760">
    <property type="entry name" value="Peptidase M41"/>
    <property type="match status" value="1"/>
</dbReference>
<dbReference type="HAMAP" id="MF_01458">
    <property type="entry name" value="FtsH"/>
    <property type="match status" value="1"/>
</dbReference>
<dbReference type="InterPro" id="IPR003593">
    <property type="entry name" value="AAA+_ATPase"/>
</dbReference>
<dbReference type="InterPro" id="IPR041569">
    <property type="entry name" value="AAA_lid_3"/>
</dbReference>
<dbReference type="InterPro" id="IPR003959">
    <property type="entry name" value="ATPase_AAA_core"/>
</dbReference>
<dbReference type="InterPro" id="IPR003960">
    <property type="entry name" value="ATPase_AAA_CS"/>
</dbReference>
<dbReference type="InterPro" id="IPR005936">
    <property type="entry name" value="FtsH"/>
</dbReference>
<dbReference type="InterPro" id="IPR027417">
    <property type="entry name" value="P-loop_NTPase"/>
</dbReference>
<dbReference type="InterPro" id="IPR011546">
    <property type="entry name" value="Pept_M41_FtsH_extracell"/>
</dbReference>
<dbReference type="InterPro" id="IPR000642">
    <property type="entry name" value="Peptidase_M41"/>
</dbReference>
<dbReference type="InterPro" id="IPR037219">
    <property type="entry name" value="Peptidase_M41-like"/>
</dbReference>
<dbReference type="NCBIfam" id="TIGR01241">
    <property type="entry name" value="FtsH_fam"/>
    <property type="match status" value="1"/>
</dbReference>
<dbReference type="PANTHER" id="PTHR23076:SF97">
    <property type="entry name" value="ATP-DEPENDENT ZINC METALLOPROTEASE YME1L1"/>
    <property type="match status" value="1"/>
</dbReference>
<dbReference type="PANTHER" id="PTHR23076">
    <property type="entry name" value="METALLOPROTEASE M41 FTSH"/>
    <property type="match status" value="1"/>
</dbReference>
<dbReference type="Pfam" id="PF00004">
    <property type="entry name" value="AAA"/>
    <property type="match status" value="1"/>
</dbReference>
<dbReference type="Pfam" id="PF17862">
    <property type="entry name" value="AAA_lid_3"/>
    <property type="match status" value="1"/>
</dbReference>
<dbReference type="Pfam" id="PF06480">
    <property type="entry name" value="FtsH_ext"/>
    <property type="match status" value="1"/>
</dbReference>
<dbReference type="Pfam" id="PF01434">
    <property type="entry name" value="Peptidase_M41"/>
    <property type="match status" value="1"/>
</dbReference>
<dbReference type="SMART" id="SM00382">
    <property type="entry name" value="AAA"/>
    <property type="match status" value="1"/>
</dbReference>
<dbReference type="SUPFAM" id="SSF140990">
    <property type="entry name" value="FtsH protease domain-like"/>
    <property type="match status" value="1"/>
</dbReference>
<dbReference type="SUPFAM" id="SSF52540">
    <property type="entry name" value="P-loop containing nucleoside triphosphate hydrolases"/>
    <property type="match status" value="1"/>
</dbReference>
<dbReference type="PROSITE" id="PS00674">
    <property type="entry name" value="AAA"/>
    <property type="match status" value="1"/>
</dbReference>
<feature type="chain" id="PRO_0000400380" description="ATP-dependent zinc metalloprotease FtsH">
    <location>
        <begin position="1"/>
        <end position="649"/>
    </location>
</feature>
<feature type="topological domain" description="Cytoplasmic" evidence="1">
    <location>
        <begin position="1"/>
        <end position="18"/>
    </location>
</feature>
<feature type="transmembrane region" description="Helical" evidence="1">
    <location>
        <begin position="19"/>
        <end position="39"/>
    </location>
</feature>
<feature type="topological domain" description="Periplasmic" evidence="1">
    <location>
        <begin position="40"/>
        <end position="115"/>
    </location>
</feature>
<feature type="transmembrane region" description="Helical" evidence="1">
    <location>
        <begin position="116"/>
        <end position="136"/>
    </location>
</feature>
<feature type="topological domain" description="Cytoplasmic" evidence="1">
    <location>
        <begin position="137"/>
        <end position="649"/>
    </location>
</feature>
<feature type="region of interest" description="Disordered" evidence="2">
    <location>
        <begin position="606"/>
        <end position="649"/>
    </location>
</feature>
<feature type="compositionally biased region" description="Low complexity" evidence="2">
    <location>
        <begin position="616"/>
        <end position="626"/>
    </location>
</feature>
<feature type="active site" evidence="1">
    <location>
        <position position="433"/>
    </location>
</feature>
<feature type="binding site" evidence="1">
    <location>
        <begin position="210"/>
        <end position="217"/>
    </location>
    <ligand>
        <name>ATP</name>
        <dbReference type="ChEBI" id="CHEBI:30616"/>
    </ligand>
</feature>
<feature type="binding site" evidence="1">
    <location>
        <position position="432"/>
    </location>
    <ligand>
        <name>Zn(2+)</name>
        <dbReference type="ChEBI" id="CHEBI:29105"/>
        <note>catalytic</note>
    </ligand>
</feature>
<feature type="binding site" evidence="1">
    <location>
        <position position="436"/>
    </location>
    <ligand>
        <name>Zn(2+)</name>
        <dbReference type="ChEBI" id="CHEBI:29105"/>
        <note>catalytic</note>
    </ligand>
</feature>
<feature type="binding site" evidence="1">
    <location>
        <position position="508"/>
    </location>
    <ligand>
        <name>Zn(2+)</name>
        <dbReference type="ChEBI" id="CHEBI:29105"/>
        <note>catalytic</note>
    </ligand>
</feature>
<reference key="1">
    <citation type="journal article" date="2010" name="PLoS ONE">
        <title>The complete genome sequence of Cupriavidus metallidurans strain CH34, a master survivalist in harsh and anthropogenic environments.</title>
        <authorList>
            <person name="Janssen P.J."/>
            <person name="Van Houdt R."/>
            <person name="Moors H."/>
            <person name="Monsieurs P."/>
            <person name="Morin N."/>
            <person name="Michaux A."/>
            <person name="Benotmane M.A."/>
            <person name="Leys N."/>
            <person name="Vallaeys T."/>
            <person name="Lapidus A."/>
            <person name="Monchy S."/>
            <person name="Medigue C."/>
            <person name="Taghavi S."/>
            <person name="McCorkle S."/>
            <person name="Dunn J."/>
            <person name="van der Lelie D."/>
            <person name="Mergeay M."/>
        </authorList>
    </citation>
    <scope>NUCLEOTIDE SEQUENCE [LARGE SCALE GENOMIC DNA]</scope>
    <source>
        <strain>ATCC 43123 / DSM 2839 / NBRC 102507 / CH34</strain>
    </source>
</reference>
<evidence type="ECO:0000255" key="1">
    <source>
        <dbReference type="HAMAP-Rule" id="MF_01458"/>
    </source>
</evidence>
<evidence type="ECO:0000256" key="2">
    <source>
        <dbReference type="SAM" id="MobiDB-lite"/>
    </source>
</evidence>
<comment type="function">
    <text evidence="1">Acts as a processive, ATP-dependent zinc metallopeptidase for both cytoplasmic and membrane proteins. Plays a role in the quality control of integral membrane proteins.</text>
</comment>
<comment type="cofactor">
    <cofactor evidence="1">
        <name>Zn(2+)</name>
        <dbReference type="ChEBI" id="CHEBI:29105"/>
    </cofactor>
    <text evidence="1">Binds 1 zinc ion per subunit.</text>
</comment>
<comment type="subunit">
    <text evidence="1">Homohexamer.</text>
</comment>
<comment type="subcellular location">
    <subcellularLocation>
        <location evidence="1">Cell inner membrane</location>
        <topology evidence="1">Multi-pass membrane protein</topology>
        <orientation evidence="1">Cytoplasmic side</orientation>
    </subcellularLocation>
</comment>
<comment type="similarity">
    <text evidence="1">In the central section; belongs to the AAA ATPase family.</text>
</comment>
<comment type="similarity">
    <text evidence="1">In the C-terminal section; belongs to the peptidase M41 family.</text>
</comment>
<sequence>MQCSYPLARQLERSSALNNNLFQKAAIWLVIALVLFTVFKQFDKPRAQDSVTYSQFMDDAKNGKVSRVDVQGRNLVVSPKEGSKYTIISPGDIWMVGDLMKYGVQVTGKADDEPNVLVQALYYLGPTLLIIVFWFYMMRQMQGGGKGGAFSFGKSRARLIDENQNAVTFADVAGCDESKEEVVELVDFLKDPQKFQKLGGRIPRGVLLVGPPGTGKTLLARAIAGEAKVPFFSISGSDFVEMFVGVGAARVRDMFENAKKQAPCIVFIDEIDAVGRHRGAGMGGGNDEREQTLNQMLVEMDGFEANSGVIVIAATNRADVLDKALLRPGRFDRQVYVGLPDIRGREQILKVHMRKVPIGNDVDASIIARGTPGFSGADLANLVNEAALFAARRSKRVVDMQDFEDAKDKIYMGPERKSTVMREEERKATAYHESGHAVVAKLLPKADPVHKVTIMPRGWALGVTWQLPEHDKYSKYKDNMLEEIAILFGGRAAEEVFLNAMSTGASNDFERATKIARDMVTRFGMSDSLGAMVYVDTEQDGMFGKLSSKTVSEATQQKVDAEIRRIIDDQYALAKRLLEENRDKVEAMTNALMEWETIDAEQVNDIMAGRPPRPPRGAQGPNSGGNTPPGGSPVAPTNAPATARADETV</sequence>
<organism>
    <name type="scientific">Cupriavidus metallidurans (strain ATCC 43123 / DSM 2839 / NBRC 102507 / CH34)</name>
    <name type="common">Ralstonia metallidurans</name>
    <dbReference type="NCBI Taxonomy" id="266264"/>
    <lineage>
        <taxon>Bacteria</taxon>
        <taxon>Pseudomonadati</taxon>
        <taxon>Pseudomonadota</taxon>
        <taxon>Betaproteobacteria</taxon>
        <taxon>Burkholderiales</taxon>
        <taxon>Burkholderiaceae</taxon>
        <taxon>Cupriavidus</taxon>
    </lineage>
</organism>
<proteinExistence type="inferred from homology"/>
<accession>Q1LLA9</accession>
<keyword id="KW-0067">ATP-binding</keyword>
<keyword id="KW-0997">Cell inner membrane</keyword>
<keyword id="KW-1003">Cell membrane</keyword>
<keyword id="KW-0378">Hydrolase</keyword>
<keyword id="KW-0472">Membrane</keyword>
<keyword id="KW-0479">Metal-binding</keyword>
<keyword id="KW-0482">Metalloprotease</keyword>
<keyword id="KW-0547">Nucleotide-binding</keyword>
<keyword id="KW-0645">Protease</keyword>
<keyword id="KW-1185">Reference proteome</keyword>
<keyword id="KW-0812">Transmembrane</keyword>
<keyword id="KW-1133">Transmembrane helix</keyword>
<keyword id="KW-0862">Zinc</keyword>
<protein>
    <recommendedName>
        <fullName evidence="1">ATP-dependent zinc metalloprotease FtsH</fullName>
        <ecNumber evidence="1">3.4.24.-</ecNumber>
    </recommendedName>
</protein>
<gene>
    <name evidence="1" type="primary">ftsH</name>
    <name type="ordered locus">Rmet_2188</name>
</gene>